<dbReference type="EMBL" id="AAFI02000019">
    <property type="protein sequence ID" value="EAL69064.1"/>
    <property type="molecule type" value="Genomic_DNA"/>
</dbReference>
<dbReference type="RefSeq" id="XP_642989.1">
    <property type="nucleotide sequence ID" value="XM_637897.1"/>
</dbReference>
<dbReference type="SMR" id="Q550E3"/>
<dbReference type="STRING" id="44689.Q550E3"/>
<dbReference type="PaxDb" id="44689-DDB0232128"/>
<dbReference type="EnsemblProtists" id="EAL69064">
    <property type="protein sequence ID" value="EAL69064"/>
    <property type="gene ID" value="DDB_G0277125"/>
</dbReference>
<dbReference type="GeneID" id="8620862"/>
<dbReference type="KEGG" id="ddi:DDB_G0277125"/>
<dbReference type="dictyBase" id="DDB_G0277125">
    <property type="gene designation" value="hspG11"/>
</dbReference>
<dbReference type="VEuPathDB" id="AmoebaDB:DDB_G0277125"/>
<dbReference type="HOGENOM" id="CLU_173640_0_0_1"/>
<dbReference type="InParanoid" id="Q550E3"/>
<dbReference type="PhylomeDB" id="Q550E3"/>
<dbReference type="PRO" id="PR:Q550E3"/>
<dbReference type="Proteomes" id="UP000002195">
    <property type="component" value="Chromosome 2"/>
</dbReference>
<dbReference type="CDD" id="cd06464">
    <property type="entry name" value="ACD_sHsps-like"/>
    <property type="match status" value="1"/>
</dbReference>
<dbReference type="Gene3D" id="2.60.40.790">
    <property type="match status" value="1"/>
</dbReference>
<dbReference type="InterPro" id="IPR002068">
    <property type="entry name" value="A-crystallin/Hsp20_dom"/>
</dbReference>
<dbReference type="InterPro" id="IPR008978">
    <property type="entry name" value="HSP20-like_chaperone"/>
</dbReference>
<dbReference type="InterPro" id="IPR051779">
    <property type="entry name" value="HspG1-11-like"/>
</dbReference>
<dbReference type="PANTHER" id="PTHR46827">
    <property type="entry name" value="HEAT SHOCK PROTEIN DDB_G0288861-RELATED"/>
    <property type="match status" value="1"/>
</dbReference>
<dbReference type="PANTHER" id="PTHR46827:SF1">
    <property type="entry name" value="HEAT SHOCK PROTEIN DDB_G0288861-RELATED"/>
    <property type="match status" value="1"/>
</dbReference>
<dbReference type="Pfam" id="PF00011">
    <property type="entry name" value="HSP20"/>
    <property type="match status" value="1"/>
</dbReference>
<dbReference type="SUPFAM" id="SSF49764">
    <property type="entry name" value="HSP20-like chaperones"/>
    <property type="match status" value="1"/>
</dbReference>
<dbReference type="PROSITE" id="PS01031">
    <property type="entry name" value="SHSP"/>
    <property type="match status" value="1"/>
</dbReference>
<proteinExistence type="inferred from homology"/>
<organism>
    <name type="scientific">Dictyostelium discoideum</name>
    <name type="common">Social amoeba</name>
    <dbReference type="NCBI Taxonomy" id="44689"/>
    <lineage>
        <taxon>Eukaryota</taxon>
        <taxon>Amoebozoa</taxon>
        <taxon>Evosea</taxon>
        <taxon>Eumycetozoa</taxon>
        <taxon>Dictyostelia</taxon>
        <taxon>Dictyosteliales</taxon>
        <taxon>Dictyosteliaceae</taxon>
        <taxon>Dictyostelium</taxon>
    </lineage>
</organism>
<accession>Q550E3</accession>
<accession>Q86KF1</accession>
<comment type="similarity">
    <text evidence="1">Belongs to the small heat shock protein (HSP20) family.</text>
</comment>
<keyword id="KW-1185">Reference proteome</keyword>
<keyword id="KW-0346">Stress response</keyword>
<reference key="1">
    <citation type="journal article" date="2002" name="Nature">
        <title>Sequence and analysis of chromosome 2 of Dictyostelium discoideum.</title>
        <authorList>
            <person name="Gloeckner G."/>
            <person name="Eichinger L."/>
            <person name="Szafranski K."/>
            <person name="Pachebat J.A."/>
            <person name="Bankier A.T."/>
            <person name="Dear P.H."/>
            <person name="Lehmann R."/>
            <person name="Baumgart C."/>
            <person name="Parra G."/>
            <person name="Abril J.F."/>
            <person name="Guigo R."/>
            <person name="Kumpf K."/>
            <person name="Tunggal B."/>
            <person name="Cox E.C."/>
            <person name="Quail M.A."/>
            <person name="Platzer M."/>
            <person name="Rosenthal A."/>
            <person name="Noegel A.A."/>
        </authorList>
    </citation>
    <scope>NUCLEOTIDE SEQUENCE [LARGE SCALE GENOMIC DNA]</scope>
    <source>
        <strain>AX4</strain>
    </source>
</reference>
<reference key="2">
    <citation type="journal article" date="2005" name="Nature">
        <title>The genome of the social amoeba Dictyostelium discoideum.</title>
        <authorList>
            <person name="Eichinger L."/>
            <person name="Pachebat J.A."/>
            <person name="Gloeckner G."/>
            <person name="Rajandream M.A."/>
            <person name="Sucgang R."/>
            <person name="Berriman M."/>
            <person name="Song J."/>
            <person name="Olsen R."/>
            <person name="Szafranski K."/>
            <person name="Xu Q."/>
            <person name="Tunggal B."/>
            <person name="Kummerfeld S."/>
            <person name="Madera M."/>
            <person name="Konfortov B.A."/>
            <person name="Rivero F."/>
            <person name="Bankier A.T."/>
            <person name="Lehmann R."/>
            <person name="Hamlin N."/>
            <person name="Davies R."/>
            <person name="Gaudet P."/>
            <person name="Fey P."/>
            <person name="Pilcher K."/>
            <person name="Chen G."/>
            <person name="Saunders D."/>
            <person name="Sodergren E.J."/>
            <person name="Davis P."/>
            <person name="Kerhornou A."/>
            <person name="Nie X."/>
            <person name="Hall N."/>
            <person name="Anjard C."/>
            <person name="Hemphill L."/>
            <person name="Bason N."/>
            <person name="Farbrother P."/>
            <person name="Desany B."/>
            <person name="Just E."/>
            <person name="Morio T."/>
            <person name="Rost R."/>
            <person name="Churcher C.M."/>
            <person name="Cooper J."/>
            <person name="Haydock S."/>
            <person name="van Driessche N."/>
            <person name="Cronin A."/>
            <person name="Goodhead I."/>
            <person name="Muzny D.M."/>
            <person name="Mourier T."/>
            <person name="Pain A."/>
            <person name="Lu M."/>
            <person name="Harper D."/>
            <person name="Lindsay R."/>
            <person name="Hauser H."/>
            <person name="James K.D."/>
            <person name="Quiles M."/>
            <person name="Madan Babu M."/>
            <person name="Saito T."/>
            <person name="Buchrieser C."/>
            <person name="Wardroper A."/>
            <person name="Felder M."/>
            <person name="Thangavelu M."/>
            <person name="Johnson D."/>
            <person name="Knights A."/>
            <person name="Loulseged H."/>
            <person name="Mungall K.L."/>
            <person name="Oliver K."/>
            <person name="Price C."/>
            <person name="Quail M.A."/>
            <person name="Urushihara H."/>
            <person name="Hernandez J."/>
            <person name="Rabbinowitsch E."/>
            <person name="Steffen D."/>
            <person name="Sanders M."/>
            <person name="Ma J."/>
            <person name="Kohara Y."/>
            <person name="Sharp S."/>
            <person name="Simmonds M.N."/>
            <person name="Spiegler S."/>
            <person name="Tivey A."/>
            <person name="Sugano S."/>
            <person name="White B."/>
            <person name="Walker D."/>
            <person name="Woodward J.R."/>
            <person name="Winckler T."/>
            <person name="Tanaka Y."/>
            <person name="Shaulsky G."/>
            <person name="Schleicher M."/>
            <person name="Weinstock G.M."/>
            <person name="Rosenthal A."/>
            <person name="Cox E.C."/>
            <person name="Chisholm R.L."/>
            <person name="Gibbs R.A."/>
            <person name="Loomis W.F."/>
            <person name="Platzer M."/>
            <person name="Kay R.R."/>
            <person name="Williams J.G."/>
            <person name="Dear P.H."/>
            <person name="Noegel A.A."/>
            <person name="Barrell B.G."/>
            <person name="Kuspa A."/>
        </authorList>
    </citation>
    <scope>NUCLEOTIDE SEQUENCE [LARGE SCALE GENOMIC DNA]</scope>
    <source>
        <strain>AX4</strain>
    </source>
</reference>
<name>HSPGB_DICDI</name>
<gene>
    <name type="primary">hspG11</name>
    <name type="ORF">DDB_G0277125</name>
</gene>
<evidence type="ECO:0000255" key="1">
    <source>
        <dbReference type="PROSITE-ProRule" id="PRU00285"/>
    </source>
</evidence>
<evidence type="ECO:0000256" key="2">
    <source>
        <dbReference type="SAM" id="MobiDB-lite"/>
    </source>
</evidence>
<protein>
    <recommendedName>
        <fullName>Small heat shock protein hspG11</fullName>
    </recommendedName>
</protein>
<feature type="chain" id="PRO_0000363903" description="Small heat shock protein hspG11">
    <location>
        <begin position="1"/>
        <end position="110"/>
    </location>
</feature>
<feature type="domain" description="sHSP" evidence="1">
    <location>
        <begin position="30"/>
        <end position="110"/>
    </location>
</feature>
<feature type="region of interest" description="Disordered" evidence="2">
    <location>
        <begin position="78"/>
        <end position="110"/>
    </location>
</feature>
<feature type="compositionally biased region" description="Low complexity" evidence="2">
    <location>
        <begin position="85"/>
        <end position="96"/>
    </location>
</feature>
<feature type="compositionally biased region" description="Polar residues" evidence="2">
    <location>
        <begin position="101"/>
        <end position="110"/>
    </location>
</feature>
<sequence length="110" mass="12466">MATIFDILNTLNNNNFENCKRQCSTNKSNKTIIDILPPMDVTITNDKLIIETELAGISKDQIEIDIKDSILTIQGERKDLNKQHNNNNNNNNNNNNLVIEKSTSTSSTFR</sequence>